<name>NHAD_HALED</name>
<gene>
    <name type="primary">nhaD</name>
    <name type="ordered locus">HELO_2323</name>
</gene>
<comment type="function">
    <text evidence="3">Na(+)/H(+) antiporter that imports sodium into the cell in exchange for protons. Can also transport lithium. May be involved in adaptation to marine habitats.</text>
</comment>
<comment type="subcellular location">
    <subcellularLocation>
        <location evidence="1">Cell inner membrane</location>
        <topology evidence="1">Multi-pass membrane protein</topology>
    </subcellularLocation>
</comment>
<comment type="induction">
    <text evidence="3">Induced by hyperosmotic shock.</text>
</comment>
<comment type="similarity">
    <text evidence="4">Belongs to the NhaD Na(+)/H(+) (TC 2.A.62) antiporter family.</text>
</comment>
<comment type="caution">
    <text evidence="5">It is uncertain whether Met-1 or Met-72 is the initiator.</text>
</comment>
<comment type="sequence caution" evidence="4">
    <conflict type="erroneous initiation">
        <sequence resource="EMBL-CDS" id="CAJ44469"/>
    </conflict>
    <text>Truncated N-terminus.</text>
</comment>
<reference key="1">
    <citation type="journal article" date="2006" name="Saline Syst.">
        <title>NhaD type sodium/proton-antiporter of Halomonas elongata: a salt stress response mechanism in marine habitats?</title>
        <authorList>
            <person name="Kurz M."/>
            <person name="Brunig A.N."/>
            <person name="Galinski E.A."/>
        </authorList>
    </citation>
    <scope>NUCLEOTIDE SEQUENCE [GENOMIC DNA]</scope>
    <scope>FUNCTION AS AN ANTIPORTER</scope>
    <scope>INDUCTION</scope>
    <source>
        <strain>ATCC 33173 / DSM 2581 / NBRC 15536 / NCIMB 2198 / 1H9</strain>
    </source>
</reference>
<reference key="2">
    <citation type="journal article" date="2011" name="Environ. Microbiol.">
        <title>A blueprint of ectoine metabolism from the genome of the industrial producer Halomonas elongata DSM 2581(T).</title>
        <authorList>
            <person name="Schwibbert K."/>
            <person name="Marin-Sanguino A."/>
            <person name="Bagyan I."/>
            <person name="Heidrich G."/>
            <person name="Lentzen G."/>
            <person name="Seitz H."/>
            <person name="Rampp M."/>
            <person name="Schuster S.C."/>
            <person name="Klenk H.P."/>
            <person name="Pfeiffer F."/>
            <person name="Oesterhelt D."/>
            <person name="Kunte H.J."/>
        </authorList>
    </citation>
    <scope>NUCLEOTIDE SEQUENCE [LARGE SCALE GENOMIC DNA]</scope>
    <source>
        <strain>ATCC 33173 / DSM 2581 / NBRC 15536 / NCIMB 2198 / 1H9</strain>
    </source>
</reference>
<keyword id="KW-0050">Antiport</keyword>
<keyword id="KW-0997">Cell inner membrane</keyword>
<keyword id="KW-1003">Cell membrane</keyword>
<keyword id="KW-0406">Ion transport</keyword>
<keyword id="KW-0472">Membrane</keyword>
<keyword id="KW-0915">Sodium</keyword>
<keyword id="KW-0739">Sodium transport</keyword>
<keyword id="KW-0812">Transmembrane</keyword>
<keyword id="KW-1133">Transmembrane helix</keyword>
<keyword id="KW-0813">Transport</keyword>
<protein>
    <recommendedName>
        <fullName>Na(+)/H(+) antiporter NhaD</fullName>
    </recommendedName>
    <alternativeName>
        <fullName>Sodium/proton antiporter NhaD</fullName>
    </alternativeName>
</protein>
<feature type="chain" id="PRO_0000423660" description="Na(+)/H(+) antiporter NhaD">
    <location>
        <begin position="1"/>
        <end position="495"/>
    </location>
</feature>
<feature type="transmembrane region" description="Helical" evidence="2">
    <location>
        <begin position="17"/>
        <end position="37"/>
    </location>
</feature>
<feature type="transmembrane region" description="Helical" evidence="2">
    <location>
        <begin position="46"/>
        <end position="66"/>
    </location>
</feature>
<feature type="transmembrane region" description="Helical" evidence="2">
    <location>
        <begin position="78"/>
        <end position="98"/>
    </location>
</feature>
<feature type="transmembrane region" description="Helical" evidence="2">
    <location>
        <begin position="110"/>
        <end position="130"/>
    </location>
</feature>
<feature type="transmembrane region" description="Helical" evidence="2">
    <location>
        <begin position="153"/>
        <end position="173"/>
    </location>
</feature>
<feature type="transmembrane region" description="Helical" evidence="2">
    <location>
        <begin position="191"/>
        <end position="211"/>
    </location>
</feature>
<feature type="transmembrane region" description="Helical" evidence="2">
    <location>
        <begin position="233"/>
        <end position="253"/>
    </location>
</feature>
<feature type="transmembrane region" description="Helical" evidence="2">
    <location>
        <begin position="274"/>
        <end position="294"/>
    </location>
</feature>
<feature type="transmembrane region" description="Helical" evidence="2">
    <location>
        <begin position="295"/>
        <end position="315"/>
    </location>
</feature>
<feature type="transmembrane region" description="Helical" evidence="2">
    <location>
        <begin position="361"/>
        <end position="381"/>
    </location>
</feature>
<feature type="transmembrane region" description="Helical" evidence="2">
    <location>
        <begin position="398"/>
        <end position="418"/>
    </location>
</feature>
<feature type="transmembrane region" description="Helical" evidence="2">
    <location>
        <begin position="428"/>
        <end position="448"/>
    </location>
</feature>
<feature type="transmembrane region" description="Helical" evidence="2">
    <location>
        <begin position="468"/>
        <end position="488"/>
    </location>
</feature>
<feature type="sequence conflict" description="In Ref. 1; CAJ44469." evidence="4" ref="1">
    <original>T</original>
    <variation>P</variation>
    <location>
        <position position="166"/>
    </location>
</feature>
<feature type="sequence conflict" description="In Ref. 1; CAJ44469." evidence="4" ref="1">
    <original>N</original>
    <variation>D</variation>
    <location>
        <position position="169"/>
    </location>
</feature>
<feature type="sequence conflict" description="In Ref. 1; CAJ44469." evidence="4" ref="1">
    <original>M</original>
    <variation>L</variation>
    <location>
        <position position="175"/>
    </location>
</feature>
<feature type="sequence conflict" description="In Ref. 1; CAJ44469." evidence="4" ref="1">
    <original>L</original>
    <variation>T</variation>
    <location>
        <position position="182"/>
    </location>
</feature>
<feature type="sequence conflict" description="In Ref. 1; CAJ44469." evidence="4" ref="1">
    <original>Y</original>
    <variation>H</variation>
    <location>
        <position position="242"/>
    </location>
</feature>
<feature type="sequence conflict" description="In Ref. 1; CAJ44469." evidence="4" ref="1">
    <original>L</original>
    <variation>V</variation>
    <location>
        <position position="382"/>
    </location>
</feature>
<feature type="sequence conflict" description="In Ref. 1; CAJ44469." evidence="4" ref="1">
    <original>VL</original>
    <variation>SA</variation>
    <location>
        <begin position="399"/>
        <end position="400"/>
    </location>
</feature>
<feature type="sequence conflict" description="In Ref. 1; CAJ44469." evidence="4" ref="1">
    <original>SVVVHLMINADSFAIFH</original>
    <variation>VWSST</variation>
    <location>
        <begin position="479"/>
        <end position="495"/>
    </location>
</feature>
<dbReference type="EMBL" id="AM167899">
    <property type="protein sequence ID" value="CAJ44469.1"/>
    <property type="status" value="ALT_INIT"/>
    <property type="molecule type" value="Genomic_DNA"/>
</dbReference>
<dbReference type="EMBL" id="FN869568">
    <property type="protein sequence ID" value="CBV42207.1"/>
    <property type="molecule type" value="Genomic_DNA"/>
</dbReference>
<dbReference type="RefSeq" id="WP_013332079.1">
    <property type="nucleotide sequence ID" value="NC_014532.2"/>
</dbReference>
<dbReference type="SMR" id="E1VBT7"/>
<dbReference type="STRING" id="768066.HELO_2323"/>
<dbReference type="TCDB" id="2.A.62.1.4">
    <property type="family name" value="the nhad na(+):h(+) antiporter (nhad) family"/>
</dbReference>
<dbReference type="GeneID" id="91009626"/>
<dbReference type="KEGG" id="hel:HELO_2323"/>
<dbReference type="eggNOG" id="COG1055">
    <property type="taxonomic scope" value="Bacteria"/>
</dbReference>
<dbReference type="HOGENOM" id="CLU_029697_0_0_6"/>
<dbReference type="OrthoDB" id="9772058at2"/>
<dbReference type="Proteomes" id="UP000008707">
    <property type="component" value="Chromosome"/>
</dbReference>
<dbReference type="GO" id="GO:0005886">
    <property type="term" value="C:plasma membrane"/>
    <property type="evidence" value="ECO:0007669"/>
    <property type="project" value="UniProtKB-SubCell"/>
</dbReference>
<dbReference type="GO" id="GO:0015297">
    <property type="term" value="F:antiporter activity"/>
    <property type="evidence" value="ECO:0007669"/>
    <property type="project" value="UniProtKB-KW"/>
</dbReference>
<dbReference type="GO" id="GO:0006814">
    <property type="term" value="P:sodium ion transport"/>
    <property type="evidence" value="ECO:0007669"/>
    <property type="project" value="UniProtKB-KW"/>
</dbReference>
<dbReference type="InterPro" id="IPR004680">
    <property type="entry name" value="Cit_transptr-like_dom"/>
</dbReference>
<dbReference type="InterPro" id="IPR045016">
    <property type="entry name" value="NhaD-like"/>
</dbReference>
<dbReference type="NCBIfam" id="NF038006">
    <property type="entry name" value="NhaD_1"/>
    <property type="match status" value="1"/>
</dbReference>
<dbReference type="PANTHER" id="PTHR43269">
    <property type="entry name" value="SODIUM/PROTON ANTIPORTER 1-RELATED"/>
    <property type="match status" value="1"/>
</dbReference>
<dbReference type="PANTHER" id="PTHR43269:SF2">
    <property type="entry name" value="SODIUM_PROTON ANTIPORTER 1-RELATED"/>
    <property type="match status" value="1"/>
</dbReference>
<dbReference type="Pfam" id="PF03600">
    <property type="entry name" value="CitMHS"/>
    <property type="match status" value="1"/>
</dbReference>
<proteinExistence type="evidence at protein level"/>
<organism>
    <name type="scientific">Halomonas elongata (strain ATCC 33173 / DSM 2581 / NBRC 15536 / NCIMB 2198 / 1H9)</name>
    <dbReference type="NCBI Taxonomy" id="768066"/>
    <lineage>
        <taxon>Bacteria</taxon>
        <taxon>Pseudomonadati</taxon>
        <taxon>Pseudomonadota</taxon>
        <taxon>Gammaproteobacteria</taxon>
        <taxon>Oceanospirillales</taxon>
        <taxon>Halomonadaceae</taxon>
        <taxon>Halomonas</taxon>
    </lineage>
</organism>
<evidence type="ECO:0000250" key="1"/>
<evidence type="ECO:0000255" key="2"/>
<evidence type="ECO:0000269" key="3">
    <source>
    </source>
</evidence>
<evidence type="ECO:0000305" key="4"/>
<evidence type="ECO:0000305" key="5">
    <source>
    </source>
</evidence>
<accession>E1VBT7</accession>
<accession>Q2WBH9</accession>
<sequence length="495" mass="54941">MLTNHRSPHWLRHSARWPGFLVLALPILLFSPLAQAASAGELDLTSSLPGFIAVTLFLAAYVLVMAEEKLHMRKSKPVLVAAGLIWAMIGWVYVHAGLPDASEEAFSETLLEYSELLLFLLVAMTYINAMEERRVFDKLRAWLVEKGFSYRSLFWITGILAFWISTIANNLTTAMLMCAVVLKVAEGDKRFINLCCINVVVASNAGGAFSPFGDITTLMVWQAKLVEFQEFFELLGPALVNYLVPAIVMSLFIKNRKPAALEEHIWLKRGARRIVLLFLVTIVISVLCHTMLNLPPALGMMTGLGFLQFFGYYLRQSLPRSLERKRTRYSQRGDWRKLESLGSVVPFDVFTRIARSEWDTLLFFYGVVMSVGGLGFMGYLALLSETLYTGWDPVWANIVLGLVSSVVDNIPVMFAVISMEPDMSMGNWLLITLTAGVGGSLLSVGSAAGVALMGQARGIYTFASHMRWAPVIALGYVASVVVHLMINADSFAIFH</sequence>